<keyword id="KW-0129">CBS domain</keyword>
<keyword id="KW-0963">Cytoplasm</keyword>
<keyword id="KW-0332">GMP biosynthesis</keyword>
<keyword id="KW-0479">Metal-binding</keyword>
<keyword id="KW-0520">NAD</keyword>
<keyword id="KW-0560">Oxidoreductase</keyword>
<keyword id="KW-0630">Potassium</keyword>
<keyword id="KW-0658">Purine biosynthesis</keyword>
<keyword id="KW-1185">Reference proteome</keyword>
<keyword id="KW-0677">Repeat</keyword>
<proteinExistence type="inferred from homology"/>
<organism>
    <name type="scientific">Neurospora crassa (strain ATCC 24698 / 74-OR23-1A / CBS 708.71 / DSM 1257 / FGSC 987)</name>
    <dbReference type="NCBI Taxonomy" id="367110"/>
    <lineage>
        <taxon>Eukaryota</taxon>
        <taxon>Fungi</taxon>
        <taxon>Dikarya</taxon>
        <taxon>Ascomycota</taxon>
        <taxon>Pezizomycotina</taxon>
        <taxon>Sordariomycetes</taxon>
        <taxon>Sordariomycetidae</taxon>
        <taxon>Sordariales</taxon>
        <taxon>Sordariaceae</taxon>
        <taxon>Neurospora</taxon>
    </lineage>
</organism>
<name>IMDH_NEUCR</name>
<protein>
    <recommendedName>
        <fullName evidence="1">Inosine-5'-monophosphate dehydrogenase</fullName>
        <shortName evidence="1">IMP dehydrogenase</shortName>
        <shortName evidence="1">IMPD</shortName>
        <shortName evidence="1">IMPDH</shortName>
        <ecNumber evidence="1">1.1.1.205</ecNumber>
    </recommendedName>
</protein>
<evidence type="ECO:0000255" key="1">
    <source>
        <dbReference type="HAMAP-Rule" id="MF_03156"/>
    </source>
</evidence>
<feature type="chain" id="PRO_0000415687" description="Inosine-5'-monophosphate dehydrogenase">
    <location>
        <begin position="1"/>
        <end position="536"/>
    </location>
</feature>
<feature type="domain" description="CBS 1" evidence="1">
    <location>
        <begin position="126"/>
        <end position="187"/>
    </location>
</feature>
<feature type="domain" description="CBS 2" evidence="1">
    <location>
        <begin position="189"/>
        <end position="245"/>
    </location>
</feature>
<feature type="active site" description="Thioimidate intermediate" evidence="1">
    <location>
        <position position="340"/>
    </location>
</feature>
<feature type="active site" description="Proton acceptor" evidence="1">
    <location>
        <position position="451"/>
    </location>
</feature>
<feature type="binding site" evidence="1">
    <location>
        <begin position="283"/>
        <end position="285"/>
    </location>
    <ligand>
        <name>NAD(+)</name>
        <dbReference type="ChEBI" id="CHEBI:57540"/>
    </ligand>
</feature>
<feature type="binding site" evidence="1">
    <location>
        <begin position="333"/>
        <end position="335"/>
    </location>
    <ligand>
        <name>NAD(+)</name>
        <dbReference type="ChEBI" id="CHEBI:57540"/>
    </ligand>
</feature>
<feature type="binding site" description="in other chain" evidence="1">
    <location>
        <position position="335"/>
    </location>
    <ligand>
        <name>K(+)</name>
        <dbReference type="ChEBI" id="CHEBI:29103"/>
        <note>ligand shared between two tetrameric partners</note>
    </ligand>
</feature>
<feature type="binding site" description="in other chain" evidence="1">
    <location>
        <position position="337"/>
    </location>
    <ligand>
        <name>K(+)</name>
        <dbReference type="ChEBI" id="CHEBI:29103"/>
        <note>ligand shared between two tetrameric partners</note>
    </ligand>
</feature>
<feature type="binding site" evidence="1">
    <location>
        <position position="338"/>
    </location>
    <ligand>
        <name>IMP</name>
        <dbReference type="ChEBI" id="CHEBI:58053"/>
    </ligand>
</feature>
<feature type="binding site" description="in other chain" evidence="1">
    <location>
        <position position="340"/>
    </location>
    <ligand>
        <name>K(+)</name>
        <dbReference type="ChEBI" id="CHEBI:29103"/>
        <note>ligand shared between two tetrameric partners</note>
    </ligand>
</feature>
<feature type="binding site" evidence="1">
    <location>
        <begin position="373"/>
        <end position="375"/>
    </location>
    <ligand>
        <name>IMP</name>
        <dbReference type="ChEBI" id="CHEBI:58053"/>
    </ligand>
</feature>
<feature type="binding site" evidence="1">
    <location>
        <begin position="396"/>
        <end position="397"/>
    </location>
    <ligand>
        <name>IMP</name>
        <dbReference type="ChEBI" id="CHEBI:58053"/>
    </ligand>
</feature>
<feature type="binding site" evidence="1">
    <location>
        <begin position="421"/>
        <end position="425"/>
    </location>
    <ligand>
        <name>IMP</name>
        <dbReference type="ChEBI" id="CHEBI:58053"/>
    </ligand>
</feature>
<feature type="binding site" evidence="1">
    <location>
        <position position="463"/>
    </location>
    <ligand>
        <name>IMP</name>
        <dbReference type="ChEBI" id="CHEBI:58053"/>
    </ligand>
</feature>
<feature type="binding site" evidence="1">
    <location>
        <position position="522"/>
    </location>
    <ligand>
        <name>K(+)</name>
        <dbReference type="ChEBI" id="CHEBI:29103"/>
        <note>ligand shared between two tetrameric partners</note>
    </ligand>
</feature>
<feature type="binding site" evidence="1">
    <location>
        <position position="523"/>
    </location>
    <ligand>
        <name>K(+)</name>
        <dbReference type="ChEBI" id="CHEBI:29103"/>
        <note>ligand shared between two tetrameric partners</note>
    </ligand>
</feature>
<feature type="binding site" evidence="1">
    <location>
        <position position="524"/>
    </location>
    <ligand>
        <name>K(+)</name>
        <dbReference type="ChEBI" id="CHEBI:29103"/>
        <note>ligand shared between two tetrameric partners</note>
    </ligand>
</feature>
<sequence>MAVNGNNTFLDHTSAMEVLKEYERRDGLDIRDLMDSKLQGGLTYNDFLLLPGYIGFPASAVTLDSPITKRITLKTPLVSSPMDTVTEHEMAIHMALQGGVGVIHHNCSPDEQADMVRKVKRYENGFILDPVVITRDTTVGEAKALKEKWGFGGFPVTESGNLGSKLVGIVTNRDIQFETDLDKPVSEVMVTDLITATAGVNLLEANKILAESKKGKLPIIDKEGNLVSMISRSDLTKNLHFPLASKTKDSKQLICAAAIGTRPEDKDRLAKLVDAGLDIVILDSSQGNSMYQIEMIKWIKKEFPDLDVIGGNVVTREQAAALIAAGVDGLRIGMGSGSACITQEVMAVGRPQATAVYNVSSFAARFGVPCIADGGIQNVGHIVKGLALGASTVMMGGLLAGTTESPGTSFVSREGKLVKAYRGMGSIDAMQDKKAGGGGKDAQKSNAGTARYFSEGDSILVAQGVSGAVAHRGSINKFVPYLAAGLKHSLQDCGMTSLQELHECVENGTVRFEIRTASAQLEGGVNMESYEKKLYA</sequence>
<dbReference type="EC" id="1.1.1.205" evidence="1"/>
<dbReference type="EMBL" id="CM002236">
    <property type="protein sequence ID" value="EAA35740.1"/>
    <property type="molecule type" value="Genomic_DNA"/>
</dbReference>
<dbReference type="RefSeq" id="XP_964976.1">
    <property type="nucleotide sequence ID" value="XM_959883.3"/>
</dbReference>
<dbReference type="SMR" id="Q7SFX7"/>
<dbReference type="FunCoup" id="Q7SFX7">
    <property type="interactions" value="1064"/>
</dbReference>
<dbReference type="STRING" id="367110.Q7SFX7"/>
<dbReference type="PaxDb" id="5141-EFNCRP00000003006"/>
<dbReference type="EnsemblFungi" id="EAA35740">
    <property type="protein sequence ID" value="EAA35740"/>
    <property type="gene ID" value="NCU03117"/>
</dbReference>
<dbReference type="GeneID" id="3881134"/>
<dbReference type="KEGG" id="ncr:NCU03117"/>
<dbReference type="VEuPathDB" id="FungiDB:NCU03117"/>
<dbReference type="HOGENOM" id="CLU_022552_2_1_1"/>
<dbReference type="InParanoid" id="Q7SFX7"/>
<dbReference type="OMA" id="MGYCGAK"/>
<dbReference type="OrthoDB" id="416622at2759"/>
<dbReference type="UniPathway" id="UPA00601">
    <property type="reaction ID" value="UER00295"/>
</dbReference>
<dbReference type="Proteomes" id="UP000001805">
    <property type="component" value="Chromosome 1, Linkage Group I"/>
</dbReference>
<dbReference type="GO" id="GO:0005737">
    <property type="term" value="C:cytoplasm"/>
    <property type="evidence" value="ECO:0000318"/>
    <property type="project" value="GO_Central"/>
</dbReference>
<dbReference type="GO" id="GO:0003938">
    <property type="term" value="F:IMP dehydrogenase activity"/>
    <property type="evidence" value="ECO:0000318"/>
    <property type="project" value="GO_Central"/>
</dbReference>
<dbReference type="GO" id="GO:0046872">
    <property type="term" value="F:metal ion binding"/>
    <property type="evidence" value="ECO:0007669"/>
    <property type="project" value="UniProtKB-UniRule"/>
</dbReference>
<dbReference type="GO" id="GO:0000166">
    <property type="term" value="F:nucleotide binding"/>
    <property type="evidence" value="ECO:0007669"/>
    <property type="project" value="UniProtKB-UniRule"/>
</dbReference>
<dbReference type="GO" id="GO:0006177">
    <property type="term" value="P:GMP biosynthetic process"/>
    <property type="evidence" value="ECO:0007669"/>
    <property type="project" value="UniProtKB-UniRule"/>
</dbReference>
<dbReference type="GO" id="GO:0006183">
    <property type="term" value="P:GTP biosynthetic process"/>
    <property type="evidence" value="ECO:0000318"/>
    <property type="project" value="GO_Central"/>
</dbReference>
<dbReference type="CDD" id="cd04601">
    <property type="entry name" value="CBS_pair_IMPDH"/>
    <property type="match status" value="1"/>
</dbReference>
<dbReference type="CDD" id="cd00381">
    <property type="entry name" value="IMPDH"/>
    <property type="match status" value="1"/>
</dbReference>
<dbReference type="FunFam" id="3.20.20.70:FF:000007">
    <property type="entry name" value="Chromosome 19 SCAF14664, whole genome shotgun sequence"/>
    <property type="match status" value="1"/>
</dbReference>
<dbReference type="Gene3D" id="3.20.20.70">
    <property type="entry name" value="Aldolase class I"/>
    <property type="match status" value="1"/>
</dbReference>
<dbReference type="HAMAP" id="MF_01964">
    <property type="entry name" value="IMPDH"/>
    <property type="match status" value="1"/>
</dbReference>
<dbReference type="InterPro" id="IPR013785">
    <property type="entry name" value="Aldolase_TIM"/>
</dbReference>
<dbReference type="InterPro" id="IPR000644">
    <property type="entry name" value="CBS_dom"/>
</dbReference>
<dbReference type="InterPro" id="IPR046342">
    <property type="entry name" value="CBS_dom_sf"/>
</dbReference>
<dbReference type="InterPro" id="IPR005990">
    <property type="entry name" value="IMP_DH"/>
</dbReference>
<dbReference type="InterPro" id="IPR015875">
    <property type="entry name" value="IMP_DH/GMP_Rdtase_CS"/>
</dbReference>
<dbReference type="InterPro" id="IPR001093">
    <property type="entry name" value="IMP_DH_GMPRt"/>
</dbReference>
<dbReference type="NCBIfam" id="TIGR01302">
    <property type="entry name" value="IMP_dehydrog"/>
    <property type="match status" value="1"/>
</dbReference>
<dbReference type="PANTHER" id="PTHR11911:SF111">
    <property type="entry name" value="INOSINE-5'-MONOPHOSPHATE DEHYDROGENASE"/>
    <property type="match status" value="1"/>
</dbReference>
<dbReference type="PANTHER" id="PTHR11911">
    <property type="entry name" value="INOSINE-5-MONOPHOSPHATE DEHYDROGENASE RELATED"/>
    <property type="match status" value="1"/>
</dbReference>
<dbReference type="Pfam" id="PF00571">
    <property type="entry name" value="CBS"/>
    <property type="match status" value="2"/>
</dbReference>
<dbReference type="Pfam" id="PF00478">
    <property type="entry name" value="IMPDH"/>
    <property type="match status" value="1"/>
</dbReference>
<dbReference type="PIRSF" id="PIRSF000130">
    <property type="entry name" value="IMPDH"/>
    <property type="match status" value="1"/>
</dbReference>
<dbReference type="SMART" id="SM00116">
    <property type="entry name" value="CBS"/>
    <property type="match status" value="2"/>
</dbReference>
<dbReference type="SMART" id="SM01240">
    <property type="entry name" value="IMPDH"/>
    <property type="match status" value="1"/>
</dbReference>
<dbReference type="SUPFAM" id="SSF54631">
    <property type="entry name" value="CBS-domain pair"/>
    <property type="match status" value="1"/>
</dbReference>
<dbReference type="SUPFAM" id="SSF51412">
    <property type="entry name" value="Inosine monophosphate dehydrogenase (IMPDH)"/>
    <property type="match status" value="1"/>
</dbReference>
<dbReference type="PROSITE" id="PS51371">
    <property type="entry name" value="CBS"/>
    <property type="match status" value="2"/>
</dbReference>
<dbReference type="PROSITE" id="PS00487">
    <property type="entry name" value="IMP_DH_GMP_RED"/>
    <property type="match status" value="1"/>
</dbReference>
<gene>
    <name type="ORF">NCU03117</name>
</gene>
<comment type="function">
    <text evidence="1">Catalyzes the conversion of inosine 5'-phosphate (IMP) to xanthosine 5'-phosphate (XMP), the first committed and rate-limiting step in the de novo synthesis of guanine nucleotides, and therefore plays an important role in the regulation of cell growth.</text>
</comment>
<comment type="catalytic activity">
    <reaction evidence="1">
        <text>IMP + NAD(+) + H2O = XMP + NADH + H(+)</text>
        <dbReference type="Rhea" id="RHEA:11708"/>
        <dbReference type="ChEBI" id="CHEBI:15377"/>
        <dbReference type="ChEBI" id="CHEBI:15378"/>
        <dbReference type="ChEBI" id="CHEBI:57464"/>
        <dbReference type="ChEBI" id="CHEBI:57540"/>
        <dbReference type="ChEBI" id="CHEBI:57945"/>
        <dbReference type="ChEBI" id="CHEBI:58053"/>
        <dbReference type="EC" id="1.1.1.205"/>
    </reaction>
</comment>
<comment type="cofactor">
    <cofactor evidence="1">
        <name>K(+)</name>
        <dbReference type="ChEBI" id="CHEBI:29103"/>
    </cofactor>
</comment>
<comment type="activity regulation">
    <text evidence="1">Mycophenolic acid (MPA) is a non-competitive inhibitor that prevents formation of the closed enzyme conformation by binding to the same site as the amobile flap. In contrast, mizoribine monophosphate (MZP) is a competitive inhibitor that induces the closed conformation. MPA is a potent inhibitor of mammalian IMPDHs but a poor inhibitor of the bacterial enzymes. MZP is a more potent inhibitor of bacterial IMPDH.</text>
</comment>
<comment type="pathway">
    <text evidence="1">Purine metabolism; XMP biosynthesis via de novo pathway; XMP from IMP: step 1/1.</text>
</comment>
<comment type="subunit">
    <text evidence="1">Homotetramer.</text>
</comment>
<comment type="subcellular location">
    <subcellularLocation>
        <location evidence="1">Cytoplasm</location>
    </subcellularLocation>
</comment>
<comment type="similarity">
    <text evidence="1">Belongs to the IMPDH/GMPR family.</text>
</comment>
<accession>Q7SFX7</accession>
<reference key="1">
    <citation type="journal article" date="2003" name="Nature">
        <title>The genome sequence of the filamentous fungus Neurospora crassa.</title>
        <authorList>
            <person name="Galagan J.E."/>
            <person name="Calvo S.E."/>
            <person name="Borkovich K.A."/>
            <person name="Selker E.U."/>
            <person name="Read N.D."/>
            <person name="Jaffe D.B."/>
            <person name="FitzHugh W."/>
            <person name="Ma L.-J."/>
            <person name="Smirnov S."/>
            <person name="Purcell S."/>
            <person name="Rehman B."/>
            <person name="Elkins T."/>
            <person name="Engels R."/>
            <person name="Wang S."/>
            <person name="Nielsen C.B."/>
            <person name="Butler J."/>
            <person name="Endrizzi M."/>
            <person name="Qui D."/>
            <person name="Ianakiev P."/>
            <person name="Bell-Pedersen D."/>
            <person name="Nelson M.A."/>
            <person name="Werner-Washburne M."/>
            <person name="Selitrennikoff C.P."/>
            <person name="Kinsey J.A."/>
            <person name="Braun E.L."/>
            <person name="Zelter A."/>
            <person name="Schulte U."/>
            <person name="Kothe G.O."/>
            <person name="Jedd G."/>
            <person name="Mewes H.-W."/>
            <person name="Staben C."/>
            <person name="Marcotte E."/>
            <person name="Greenberg D."/>
            <person name="Roy A."/>
            <person name="Foley K."/>
            <person name="Naylor J."/>
            <person name="Stange-Thomann N."/>
            <person name="Barrett R."/>
            <person name="Gnerre S."/>
            <person name="Kamal M."/>
            <person name="Kamvysselis M."/>
            <person name="Mauceli E.W."/>
            <person name="Bielke C."/>
            <person name="Rudd S."/>
            <person name="Frishman D."/>
            <person name="Krystofova S."/>
            <person name="Rasmussen C."/>
            <person name="Metzenberg R.L."/>
            <person name="Perkins D.D."/>
            <person name="Kroken S."/>
            <person name="Cogoni C."/>
            <person name="Macino G."/>
            <person name="Catcheside D.E.A."/>
            <person name="Li W."/>
            <person name="Pratt R.J."/>
            <person name="Osmani S.A."/>
            <person name="DeSouza C.P.C."/>
            <person name="Glass N.L."/>
            <person name="Orbach M.J."/>
            <person name="Berglund J.A."/>
            <person name="Voelker R."/>
            <person name="Yarden O."/>
            <person name="Plamann M."/>
            <person name="Seiler S."/>
            <person name="Dunlap J.C."/>
            <person name="Radford A."/>
            <person name="Aramayo R."/>
            <person name="Natvig D.O."/>
            <person name="Alex L.A."/>
            <person name="Mannhaupt G."/>
            <person name="Ebbole D.J."/>
            <person name="Freitag M."/>
            <person name="Paulsen I."/>
            <person name="Sachs M.S."/>
            <person name="Lander E.S."/>
            <person name="Nusbaum C."/>
            <person name="Birren B.W."/>
        </authorList>
    </citation>
    <scope>NUCLEOTIDE SEQUENCE [LARGE SCALE GENOMIC DNA]</scope>
    <source>
        <strain>ATCC 24698 / 74-OR23-1A / CBS 708.71 / DSM 1257 / FGSC 987</strain>
    </source>
</reference>